<keyword id="KW-0119">Carbohydrate metabolism</keyword>
<keyword id="KW-0963">Cytoplasm</keyword>
<keyword id="KW-0328">Glycosyltransferase</keyword>
<keyword id="KW-1185">Reference proteome</keyword>
<keyword id="KW-0808">Transferase</keyword>
<name>MALQ_MYCTU</name>
<sequence length="724" mass="79745">MTELAPSLVELARRFGIATEYTDWTGRQVLVSEATLVAALAALGVPAQTEQQRNDALAAQLRSYWARPLPATIVMRAGEQTQFRVHVTDGAPADVWLQLEDGTTRAEVVQVDNFTPPFDLDGRWIGEASFVLPADLPLGYHRVNLRSGDSQASAAVVVTPDWLGLPDKLAGRRAWGLAVQLYSVRSRQSWGIGDLTDLANLALWSASAHGAGYVLVNPLHAATLPGPAGRSKPIEPSPYLPTSRRFVNPLYLRVEAIPELVDLPKRGRVQRLRTNVQQHADQLDTIDRDSAWAAKRAALKLVHRVPRSAGRELAYAAFRTREGRALDDFATWCALAETYGDDWHRWPKSLRHPDASGVADFVDKHADAVDFHRWLQWQLDEQLASAQSQALRAGMSLGIMADLAVGVHPNGADAWALQDVLAQGVTAGAPPDEFNQLGQDWSQPPWRPDRLAEQEYRPFRALIQAALRHAGAVRIDHIIGLFRLWWIPDGAPPTQGTYVRYDHDAMIGIVALEAHRAGAVVVGEDLGTVEPWVRDYLLLRGLLGTSILWFEQDRDCGPAGTPLPAERWREYCLSSVTTHDLPPTAGYLAGDQVRLRESLGLLTNPVEAELESARADRAAWMAELRRVGLLADGAEPDSEEAVLALYRYLGRTPSRLLAVALTDAVGDRRTQNQPGTTDEYPNWRVPLTGPDGQPMLLEDIFTDRRAATLAEAVRAATTSPMSCW</sequence>
<accession>P9WK23</accession>
<accession>L0TAL4</accession>
<accession>O53932</accession>
<accession>P65336</accession>
<feature type="chain" id="PRO_0000170127" description="4-alpha-glucanotransferase">
    <location>
        <begin position="1"/>
        <end position="724"/>
    </location>
</feature>
<organism>
    <name type="scientific">Mycobacterium tuberculosis (strain ATCC 25618 / H37Rv)</name>
    <dbReference type="NCBI Taxonomy" id="83332"/>
    <lineage>
        <taxon>Bacteria</taxon>
        <taxon>Bacillati</taxon>
        <taxon>Actinomycetota</taxon>
        <taxon>Actinomycetes</taxon>
        <taxon>Mycobacteriales</taxon>
        <taxon>Mycobacteriaceae</taxon>
        <taxon>Mycobacterium</taxon>
        <taxon>Mycobacterium tuberculosis complex</taxon>
    </lineage>
</organism>
<protein>
    <recommendedName>
        <fullName>4-alpha-glucanotransferase</fullName>
        <ecNumber>2.4.1.25</ecNumber>
    </recommendedName>
    <alternativeName>
        <fullName>Amylomaltase</fullName>
    </alternativeName>
    <alternativeName>
        <fullName>Disproportionating enzyme</fullName>
        <shortName>D-enzyme</shortName>
    </alternativeName>
</protein>
<comment type="catalytic activity">
    <reaction>
        <text>Transfers a segment of a (1-&gt;4)-alpha-D-glucan to a new position in an acceptor, which may be glucose or a (1-&gt;4)-alpha-D-glucan.</text>
        <dbReference type="EC" id="2.4.1.25"/>
    </reaction>
</comment>
<comment type="subcellular location">
    <subcellularLocation>
        <location evidence="1">Cytoplasm</location>
    </subcellularLocation>
</comment>
<comment type="similarity">
    <text evidence="2">Belongs to the disproportionating enzyme family.</text>
</comment>
<gene>
    <name type="primary">malQ</name>
    <name type="ordered locus">Rv1781c</name>
    <name type="ORF">MTV049.03c</name>
</gene>
<dbReference type="EC" id="2.4.1.25"/>
<dbReference type="EMBL" id="AL123456">
    <property type="protein sequence ID" value="CCP44548.1"/>
    <property type="molecule type" value="Genomic_DNA"/>
</dbReference>
<dbReference type="PIR" id="G70928">
    <property type="entry name" value="G70928"/>
</dbReference>
<dbReference type="RefSeq" id="NP_216297.1">
    <property type="nucleotide sequence ID" value="NC_000962.3"/>
</dbReference>
<dbReference type="RefSeq" id="WP_003408795.1">
    <property type="nucleotide sequence ID" value="NZ_NVQJ01000037.1"/>
</dbReference>
<dbReference type="SMR" id="P9WK23"/>
<dbReference type="FunCoup" id="P9WK23">
    <property type="interactions" value="23"/>
</dbReference>
<dbReference type="STRING" id="83332.Rv1781c"/>
<dbReference type="PaxDb" id="83332-Rv1781c"/>
<dbReference type="DNASU" id="885854"/>
<dbReference type="GeneID" id="45425759"/>
<dbReference type="GeneID" id="885854"/>
<dbReference type="KEGG" id="mtu:Rv1781c"/>
<dbReference type="KEGG" id="mtv:RVBD_1781c"/>
<dbReference type="TubercuList" id="Rv1781c"/>
<dbReference type="eggNOG" id="COG1640">
    <property type="taxonomic scope" value="Bacteria"/>
</dbReference>
<dbReference type="InParanoid" id="P9WK23"/>
<dbReference type="OrthoDB" id="9811841at2"/>
<dbReference type="PhylomeDB" id="P9WK23"/>
<dbReference type="Proteomes" id="UP000001584">
    <property type="component" value="Chromosome"/>
</dbReference>
<dbReference type="GO" id="GO:0005829">
    <property type="term" value="C:cytosol"/>
    <property type="evidence" value="ECO:0007005"/>
    <property type="project" value="MTBBASE"/>
</dbReference>
<dbReference type="GO" id="GO:0004134">
    <property type="term" value="F:4-alpha-glucanotransferase activity"/>
    <property type="evidence" value="ECO:0007669"/>
    <property type="project" value="UniProtKB-EC"/>
</dbReference>
<dbReference type="GO" id="GO:0005975">
    <property type="term" value="P:carbohydrate metabolic process"/>
    <property type="evidence" value="ECO:0007669"/>
    <property type="project" value="InterPro"/>
</dbReference>
<dbReference type="FunFam" id="3.20.20.80:FF:000082">
    <property type="entry name" value="4-alpha-glucanotransferase"/>
    <property type="match status" value="1"/>
</dbReference>
<dbReference type="Gene3D" id="3.20.20.80">
    <property type="entry name" value="Glycosidases"/>
    <property type="match status" value="1"/>
</dbReference>
<dbReference type="InterPro" id="IPR003385">
    <property type="entry name" value="Glyco_hydro_77"/>
</dbReference>
<dbReference type="InterPro" id="IPR017853">
    <property type="entry name" value="Glycoside_hydrolase_SF"/>
</dbReference>
<dbReference type="InterPro" id="IPR048458">
    <property type="entry name" value="MalQ_N"/>
</dbReference>
<dbReference type="NCBIfam" id="TIGR00217">
    <property type="entry name" value="malQ"/>
    <property type="match status" value="1"/>
</dbReference>
<dbReference type="PANTHER" id="PTHR32438">
    <property type="entry name" value="4-ALPHA-GLUCANOTRANSFERASE DPE1, CHLOROPLASTIC/AMYLOPLASTIC"/>
    <property type="match status" value="1"/>
</dbReference>
<dbReference type="PANTHER" id="PTHR32438:SF5">
    <property type="entry name" value="4-ALPHA-GLUCANOTRANSFERASE DPE1, CHLOROPLASTIC_AMYLOPLASTIC"/>
    <property type="match status" value="1"/>
</dbReference>
<dbReference type="Pfam" id="PF02446">
    <property type="entry name" value="Glyco_hydro_77"/>
    <property type="match status" value="1"/>
</dbReference>
<dbReference type="Pfam" id="PF21226">
    <property type="entry name" value="MalQ_N"/>
    <property type="match status" value="1"/>
</dbReference>
<dbReference type="SUPFAM" id="SSF51445">
    <property type="entry name" value="(Trans)glycosidases"/>
    <property type="match status" value="1"/>
</dbReference>
<evidence type="ECO:0000250" key="1"/>
<evidence type="ECO:0000305" key="2"/>
<reference key="1">
    <citation type="journal article" date="1998" name="Nature">
        <title>Deciphering the biology of Mycobacterium tuberculosis from the complete genome sequence.</title>
        <authorList>
            <person name="Cole S.T."/>
            <person name="Brosch R."/>
            <person name="Parkhill J."/>
            <person name="Garnier T."/>
            <person name="Churcher C.M."/>
            <person name="Harris D.E."/>
            <person name="Gordon S.V."/>
            <person name="Eiglmeier K."/>
            <person name="Gas S."/>
            <person name="Barry C.E. III"/>
            <person name="Tekaia F."/>
            <person name="Badcock K."/>
            <person name="Basham D."/>
            <person name="Brown D."/>
            <person name="Chillingworth T."/>
            <person name="Connor R."/>
            <person name="Davies R.M."/>
            <person name="Devlin K."/>
            <person name="Feltwell T."/>
            <person name="Gentles S."/>
            <person name="Hamlin N."/>
            <person name="Holroyd S."/>
            <person name="Hornsby T."/>
            <person name="Jagels K."/>
            <person name="Krogh A."/>
            <person name="McLean J."/>
            <person name="Moule S."/>
            <person name="Murphy L.D."/>
            <person name="Oliver S."/>
            <person name="Osborne J."/>
            <person name="Quail M.A."/>
            <person name="Rajandream M.A."/>
            <person name="Rogers J."/>
            <person name="Rutter S."/>
            <person name="Seeger K."/>
            <person name="Skelton S."/>
            <person name="Squares S."/>
            <person name="Squares R."/>
            <person name="Sulston J.E."/>
            <person name="Taylor K."/>
            <person name="Whitehead S."/>
            <person name="Barrell B.G."/>
        </authorList>
    </citation>
    <scope>NUCLEOTIDE SEQUENCE [LARGE SCALE GENOMIC DNA]</scope>
    <source>
        <strain>ATCC 25618 / H37Rv</strain>
    </source>
</reference>
<reference key="2">
    <citation type="journal article" date="2011" name="Mol. Cell. Proteomics">
        <title>Proteogenomic analysis of Mycobacterium tuberculosis by high resolution mass spectrometry.</title>
        <authorList>
            <person name="Kelkar D.S."/>
            <person name="Kumar D."/>
            <person name="Kumar P."/>
            <person name="Balakrishnan L."/>
            <person name="Muthusamy B."/>
            <person name="Yadav A.K."/>
            <person name="Shrivastava P."/>
            <person name="Marimuthu A."/>
            <person name="Anand S."/>
            <person name="Sundaram H."/>
            <person name="Kingsbury R."/>
            <person name="Harsha H.C."/>
            <person name="Nair B."/>
            <person name="Prasad T.S."/>
            <person name="Chauhan D.S."/>
            <person name="Katoch K."/>
            <person name="Katoch V.M."/>
            <person name="Kumar P."/>
            <person name="Chaerkady R."/>
            <person name="Ramachandran S."/>
            <person name="Dash D."/>
            <person name="Pandey A."/>
        </authorList>
    </citation>
    <scope>IDENTIFICATION BY MASS SPECTROMETRY [LARGE SCALE ANALYSIS]</scope>
    <source>
        <strain>ATCC 25618 / H37Rv</strain>
    </source>
</reference>
<proteinExistence type="evidence at protein level"/>